<keyword id="KW-0325">Glycoprotein</keyword>
<keyword id="KW-1040">Host Golgi apparatus</keyword>
<keyword id="KW-1043">Host membrane</keyword>
<keyword id="KW-0945">Host-virus interaction</keyword>
<keyword id="KW-0472">Membrane</keyword>
<keyword id="KW-0812">Transmembrane</keyword>
<keyword id="KW-1133">Transmembrane helix</keyword>
<keyword id="KW-0261">Viral envelope protein</keyword>
<keyword id="KW-0899">Viral immunoevasion</keyword>
<keyword id="KW-0468">Viral matrix protein</keyword>
<keyword id="KW-0946">Virion</keyword>
<organism>
    <name type="scientific">Bovine coronavirus (strain Mebus)</name>
    <name type="common">BCoV</name>
    <name type="synonym">BCV</name>
    <dbReference type="NCBI Taxonomy" id="11132"/>
    <lineage>
        <taxon>Viruses</taxon>
        <taxon>Riboviria</taxon>
        <taxon>Orthornavirae</taxon>
        <taxon>Pisuviricota</taxon>
        <taxon>Pisoniviricetes</taxon>
        <taxon>Nidovirales</taxon>
        <taxon>Cornidovirineae</taxon>
        <taxon>Coronaviridae</taxon>
        <taxon>Orthocoronavirinae</taxon>
        <taxon>Betacoronavirus</taxon>
        <taxon>Embecovirus</taxon>
        <taxon>Betacoronavirus 1</taxon>
    </lineage>
</organism>
<gene>
    <name evidence="1" type="primary">M</name>
    <name type="ORF">6</name>
</gene>
<accession>P69704</accession>
<accession>P10526</accession>
<accession>P36359</accession>
<sequence length="230" mass="26372">MSSVTTPAPVYTWTADEAIKFLKEWNFSLGIILLFITIILQFGYTSRSMFVYVIKMIILWLMWPLTIILTIFNCVYALNNVYLGFSIVFTIVAIIMWIVYFVNSIRLFIRTGSWWSFNPETNNLMCIDMKGRMYVRPIIEDYHTLTVTIIRGHLYMQGIKLGTGYSLSDLPAYVTVAKVSHLLTYKRGFLDKIGDTSGFAVYVKSKVGNYRLPSTQKGSGMDTALLRNNI</sequence>
<feature type="chain" id="PRO_0000106030" description="Membrane protein">
    <location>
        <begin position="1"/>
        <end position="230"/>
    </location>
</feature>
<feature type="topological domain" description="Virion surface" evidence="1">
    <location>
        <begin position="1"/>
        <end position="24"/>
    </location>
</feature>
<feature type="transmembrane region" description="Helical" evidence="1">
    <location>
        <begin position="25"/>
        <end position="45"/>
    </location>
</feature>
<feature type="topological domain" description="Intravirion" evidence="1">
    <location>
        <begin position="46"/>
        <end position="55"/>
    </location>
</feature>
<feature type="transmembrane region" description="Helical" evidence="1">
    <location>
        <begin position="56"/>
        <end position="76"/>
    </location>
</feature>
<feature type="topological domain" description="Virion surface" evidence="1">
    <location>
        <begin position="77"/>
        <end position="84"/>
    </location>
</feature>
<feature type="transmembrane region" description="Helical" evidence="1">
    <location>
        <begin position="85"/>
        <end position="105"/>
    </location>
</feature>
<feature type="topological domain" description="Intravirion" evidence="1">
    <location>
        <begin position="106"/>
        <end position="228"/>
    </location>
</feature>
<proteinExistence type="evidence at protein level"/>
<comment type="function">
    <text evidence="1 2">Component of the viral envelope that plays a central role in virus morphogenesis and assembly via its interactions with other viral proteins.</text>
</comment>
<comment type="subunit">
    <text evidence="1 2 3">Homomultimer. Interacts with envelope E protein in the budding compartment of the host cell, which is located between endoplasmic reticulum and the Golgi complex. Forms a complex with HE and S proteins. Interacts with nucleocapsid N protein. This interaction probably participates in RNA packaging into the virus.</text>
</comment>
<comment type="subcellular location">
    <subcellularLocation>
        <location evidence="1">Virion membrane</location>
        <topology evidence="1">Multi-pass membrane protein</topology>
    </subcellularLocation>
    <subcellularLocation>
        <location evidence="1">Host Golgi apparatus membrane</location>
        <topology evidence="1">Multi-pass membrane protein</topology>
    </subcellularLocation>
    <text evidence="1">Largely embedded in the lipid bilayer.</text>
</comment>
<comment type="similarity">
    <text evidence="1">Belongs to the betacoronaviruses M protein family.</text>
</comment>
<protein>
    <recommendedName>
        <fullName evidence="1">Membrane protein</fullName>
        <shortName evidence="1">M protein</shortName>
    </recommendedName>
    <alternativeName>
        <fullName evidence="1">E1 glycoprotein</fullName>
    </alternativeName>
    <alternativeName>
        <fullName evidence="1">Matrix glycoprotein</fullName>
    </alternativeName>
    <alternativeName>
        <fullName evidence="1">Membrane glycoprotein</fullName>
    </alternativeName>
</protein>
<dbReference type="EMBL" id="M27474">
    <property type="protein sequence ID" value="AAA79959.1"/>
    <property type="molecule type" value="Genomic_RNA"/>
</dbReference>
<dbReference type="EMBL" id="U00735">
    <property type="protein sequence ID" value="AAK29779.2"/>
    <property type="molecule type" value="Genomic_RNA"/>
</dbReference>
<dbReference type="PIR" id="A26347">
    <property type="entry name" value="VGIHBC"/>
</dbReference>
<dbReference type="SMR" id="P69704"/>
<dbReference type="Proteomes" id="UP000007554">
    <property type="component" value="Genome"/>
</dbReference>
<dbReference type="GO" id="GO:0044178">
    <property type="term" value="C:host cell Golgi membrane"/>
    <property type="evidence" value="ECO:0007669"/>
    <property type="project" value="UniProtKB-SubCell"/>
</dbReference>
<dbReference type="GO" id="GO:0016020">
    <property type="term" value="C:membrane"/>
    <property type="evidence" value="ECO:0007669"/>
    <property type="project" value="UniProtKB-UniRule"/>
</dbReference>
<dbReference type="GO" id="GO:0019031">
    <property type="term" value="C:viral envelope"/>
    <property type="evidence" value="ECO:0007669"/>
    <property type="project" value="UniProtKB-UniRule"/>
</dbReference>
<dbReference type="GO" id="GO:0055036">
    <property type="term" value="C:virion membrane"/>
    <property type="evidence" value="ECO:0007669"/>
    <property type="project" value="UniProtKB-SubCell"/>
</dbReference>
<dbReference type="GO" id="GO:0039660">
    <property type="term" value="F:structural constituent of virion"/>
    <property type="evidence" value="ECO:0007669"/>
    <property type="project" value="UniProtKB-UniRule"/>
</dbReference>
<dbReference type="CDD" id="cd21568">
    <property type="entry name" value="HCoV-like_M"/>
    <property type="match status" value="1"/>
</dbReference>
<dbReference type="HAMAP" id="MF_04202">
    <property type="entry name" value="BETA_CORONA_M"/>
    <property type="match status" value="1"/>
</dbReference>
<dbReference type="InterPro" id="IPR002574">
    <property type="entry name" value="M_CoV"/>
</dbReference>
<dbReference type="InterPro" id="IPR044362">
    <property type="entry name" value="M_HCoV-like"/>
</dbReference>
<dbReference type="Pfam" id="PF01635">
    <property type="entry name" value="CoV_M"/>
    <property type="match status" value="1"/>
</dbReference>
<dbReference type="PROSITE" id="PS51927">
    <property type="entry name" value="COV_M"/>
    <property type="match status" value="1"/>
</dbReference>
<organismHost>
    <name type="scientific">Bos taurus</name>
    <name type="common">Bovine</name>
    <dbReference type="NCBI Taxonomy" id="9913"/>
</organismHost>
<reference key="1">
    <citation type="journal article" date="1987" name="Virology">
        <title>Sequence analysis of the bovine coronavirus nucleocapsid and matrix protein genes.</title>
        <authorList>
            <person name="Lapps W.E."/>
            <person name="Hogue B.G."/>
            <person name="Brian D.A."/>
        </authorList>
    </citation>
    <scope>NUCLEOTIDE SEQUENCE [GENOMIC RNA]</scope>
</reference>
<reference key="2">
    <citation type="journal article" date="1987" name="Adv. Exp. Med. Biol.">
        <title>Deduced amino acid sequence and potential O-glycosylation sites for the bovine coronavirus matrix protein.</title>
        <authorList>
            <person name="Lapps W.E."/>
            <person name="Hogue B.G."/>
            <person name="Brian D.A."/>
        </authorList>
    </citation>
    <scope>NUCLEOTIDE SEQUENCE [GENOMIC RNA]</scope>
</reference>
<reference key="3">
    <citation type="journal article" date="1994" name="J. Virol.">
        <title>A cis-acting function for the coronavirus leader in defective interfering RNA replication.</title>
        <authorList>
            <person name="Chang R.Y."/>
            <person name="Hofmann M.A."/>
            <person name="Sethna P.B."/>
            <person name="Brian D.A."/>
        </authorList>
    </citation>
    <scope>NUCLEOTIDE SEQUENCE [GENOMIC RNA]</scope>
</reference>
<reference key="4">
    <citation type="journal article" date="1997" name="J. Virol.">
        <title>Protein interactions during coronavirus assembly.</title>
        <authorList>
            <person name="Nguyen V.-P."/>
            <person name="Hogue B.G."/>
        </authorList>
    </citation>
    <scope>INTERACTION WITH HE AND S</scope>
</reference>
<name>VME1_CVBM</name>
<evidence type="ECO:0000255" key="1">
    <source>
        <dbReference type="HAMAP-Rule" id="MF_04202"/>
    </source>
</evidence>
<evidence type="ECO:0000255" key="2">
    <source>
        <dbReference type="PROSITE-ProRule" id="PRU01275"/>
    </source>
</evidence>
<evidence type="ECO:0000269" key="3">
    <source>
    </source>
</evidence>